<dbReference type="EC" id="5.3.1.16" evidence="1"/>
<dbReference type="EMBL" id="CP001146">
    <property type="protein sequence ID" value="ACI18593.1"/>
    <property type="molecule type" value="Genomic_DNA"/>
</dbReference>
<dbReference type="RefSeq" id="WP_012547225.1">
    <property type="nucleotide sequence ID" value="NC_011297.1"/>
</dbReference>
<dbReference type="SMR" id="B5YE89"/>
<dbReference type="STRING" id="309799.DICTH_0997"/>
<dbReference type="PaxDb" id="309799-DICTH_0997"/>
<dbReference type="KEGG" id="dth:DICTH_0997"/>
<dbReference type="eggNOG" id="COG0106">
    <property type="taxonomic scope" value="Bacteria"/>
</dbReference>
<dbReference type="HOGENOM" id="CLU_048577_1_1_0"/>
<dbReference type="OrthoDB" id="9807749at2"/>
<dbReference type="UniPathway" id="UPA00031">
    <property type="reaction ID" value="UER00009"/>
</dbReference>
<dbReference type="Proteomes" id="UP000001733">
    <property type="component" value="Chromosome"/>
</dbReference>
<dbReference type="GO" id="GO:0005737">
    <property type="term" value="C:cytoplasm"/>
    <property type="evidence" value="ECO:0007669"/>
    <property type="project" value="UniProtKB-SubCell"/>
</dbReference>
<dbReference type="GO" id="GO:0003949">
    <property type="term" value="F:1-(5-phosphoribosyl)-5-[(5-phosphoribosylamino)methylideneamino]imidazole-4-carboxamide isomerase activity"/>
    <property type="evidence" value="ECO:0007669"/>
    <property type="project" value="UniProtKB-UniRule"/>
</dbReference>
<dbReference type="GO" id="GO:0000105">
    <property type="term" value="P:L-histidine biosynthetic process"/>
    <property type="evidence" value="ECO:0007669"/>
    <property type="project" value="UniProtKB-UniRule"/>
</dbReference>
<dbReference type="GO" id="GO:0000162">
    <property type="term" value="P:L-tryptophan biosynthetic process"/>
    <property type="evidence" value="ECO:0007669"/>
    <property type="project" value="TreeGrafter"/>
</dbReference>
<dbReference type="FunFam" id="3.20.20.70:FF:000009">
    <property type="entry name" value="1-(5-phosphoribosyl)-5-[(5-phosphoribosylamino)methylideneamino] imidazole-4-carboxamide isomerase"/>
    <property type="match status" value="1"/>
</dbReference>
<dbReference type="Gene3D" id="3.20.20.70">
    <property type="entry name" value="Aldolase class I"/>
    <property type="match status" value="1"/>
</dbReference>
<dbReference type="HAMAP" id="MF_01014">
    <property type="entry name" value="HisA"/>
    <property type="match status" value="1"/>
</dbReference>
<dbReference type="InterPro" id="IPR013785">
    <property type="entry name" value="Aldolase_TIM"/>
</dbReference>
<dbReference type="InterPro" id="IPR006062">
    <property type="entry name" value="His_biosynth"/>
</dbReference>
<dbReference type="InterPro" id="IPR044524">
    <property type="entry name" value="Isoase_HisA-like"/>
</dbReference>
<dbReference type="InterPro" id="IPR023016">
    <property type="entry name" value="Isoase_HisA-like_bact"/>
</dbReference>
<dbReference type="InterPro" id="IPR011060">
    <property type="entry name" value="RibuloseP-bd_barrel"/>
</dbReference>
<dbReference type="PANTHER" id="PTHR43090">
    <property type="entry name" value="1-(5-PHOSPHORIBOSYL)-5-[(5-PHOSPHORIBOSYLAMINO)METHYLIDENEAMINO] IMIDAZOLE-4-CARBOXAMIDE ISOMERASE"/>
    <property type="match status" value="1"/>
</dbReference>
<dbReference type="PANTHER" id="PTHR43090:SF2">
    <property type="entry name" value="1-(5-PHOSPHORIBOSYL)-5-[(5-PHOSPHORIBOSYLAMINO)METHYLIDENEAMINO] IMIDAZOLE-4-CARBOXAMIDE ISOMERASE"/>
    <property type="match status" value="1"/>
</dbReference>
<dbReference type="Pfam" id="PF00977">
    <property type="entry name" value="His_biosynth"/>
    <property type="match status" value="1"/>
</dbReference>
<dbReference type="SUPFAM" id="SSF51366">
    <property type="entry name" value="Ribulose-phoshate binding barrel"/>
    <property type="match status" value="1"/>
</dbReference>
<reference key="1">
    <citation type="journal article" date="2014" name="Genome Announc.">
        <title>Complete Genome Sequence of the Extreme Thermophile Dictyoglomus thermophilum H-6-12.</title>
        <authorList>
            <person name="Coil D.A."/>
            <person name="Badger J.H."/>
            <person name="Forberger H.C."/>
            <person name="Riggs F."/>
            <person name="Madupu R."/>
            <person name="Fedorova N."/>
            <person name="Ward N."/>
            <person name="Robb F.T."/>
            <person name="Eisen J.A."/>
        </authorList>
    </citation>
    <scope>NUCLEOTIDE SEQUENCE [LARGE SCALE GENOMIC DNA]</scope>
    <source>
        <strain>ATCC 35947 / DSM 3960 / H-6-12</strain>
    </source>
</reference>
<comment type="catalytic activity">
    <reaction evidence="1">
        <text>1-(5-phospho-beta-D-ribosyl)-5-[(5-phospho-beta-D-ribosylamino)methylideneamino]imidazole-4-carboxamide = 5-[(5-phospho-1-deoxy-D-ribulos-1-ylimino)methylamino]-1-(5-phospho-beta-D-ribosyl)imidazole-4-carboxamide</text>
        <dbReference type="Rhea" id="RHEA:15469"/>
        <dbReference type="ChEBI" id="CHEBI:58435"/>
        <dbReference type="ChEBI" id="CHEBI:58525"/>
        <dbReference type="EC" id="5.3.1.16"/>
    </reaction>
</comment>
<comment type="pathway">
    <text evidence="1">Amino-acid biosynthesis; L-histidine biosynthesis; L-histidine from 5-phospho-alpha-D-ribose 1-diphosphate: step 4/9.</text>
</comment>
<comment type="subcellular location">
    <subcellularLocation>
        <location evidence="1">Cytoplasm</location>
    </subcellularLocation>
</comment>
<comment type="similarity">
    <text evidence="1">Belongs to the HisA/HisF family.</text>
</comment>
<feature type="chain" id="PRO_1000135106" description="1-(5-phosphoribosyl)-5-[(5-phosphoribosylamino)methylideneamino] imidazole-4-carboxamide isomerase">
    <location>
        <begin position="1"/>
        <end position="242"/>
    </location>
</feature>
<feature type="active site" description="Proton acceptor" evidence="1">
    <location>
        <position position="8"/>
    </location>
</feature>
<feature type="active site" description="Proton donor" evidence="1">
    <location>
        <position position="129"/>
    </location>
</feature>
<proteinExistence type="inferred from homology"/>
<organism>
    <name type="scientific">Dictyoglomus thermophilum (strain ATCC 35947 / DSM 3960 / H-6-12)</name>
    <dbReference type="NCBI Taxonomy" id="309799"/>
    <lineage>
        <taxon>Bacteria</taxon>
        <taxon>Pseudomonadati</taxon>
        <taxon>Dictyoglomota</taxon>
        <taxon>Dictyoglomia</taxon>
        <taxon>Dictyoglomales</taxon>
        <taxon>Dictyoglomaceae</taxon>
        <taxon>Dictyoglomus</taxon>
    </lineage>
</organism>
<evidence type="ECO:0000255" key="1">
    <source>
        <dbReference type="HAMAP-Rule" id="MF_01014"/>
    </source>
</evidence>
<keyword id="KW-0028">Amino-acid biosynthesis</keyword>
<keyword id="KW-0963">Cytoplasm</keyword>
<keyword id="KW-0368">Histidine biosynthesis</keyword>
<keyword id="KW-0413">Isomerase</keyword>
<sequence>MLIIPAIDIYKHKVVRMETGKKEKIVLEFNNPLDLAKYWEEKGAKALHLIDLQSAIDANDESKSIVRDIVRSVSIPVEVGGGYRSREKIEEAISWGVWRVIVSSILGMELDYLLDLFSKYENKIIPSIDWYDGKVGIKGWQDFIEWRDIKRKIDLLKVREVIFTDISRDGTLKGVNLENIKNFLSLHDYDVWIAGGISSIEDVIKIKDLSENTGRIKGIIIGRALLEGKINWEEAKKIIDAS</sequence>
<gene>
    <name evidence="1" type="primary">hisA</name>
    <name type="ordered locus">DICTH_0997</name>
</gene>
<protein>
    <recommendedName>
        <fullName evidence="1">1-(5-phosphoribosyl)-5-[(5-phosphoribosylamino)methylideneamino] imidazole-4-carboxamide isomerase</fullName>
        <ecNumber evidence="1">5.3.1.16</ecNumber>
    </recommendedName>
    <alternativeName>
        <fullName evidence="1">Phosphoribosylformimino-5-aminoimidazole carboxamide ribotide isomerase</fullName>
    </alternativeName>
</protein>
<accession>B5YE89</accession>
<name>HIS4_DICT6</name>